<reference key="1">
    <citation type="submission" date="2006-03" db="EMBL/GenBank/DDBJ databases">
        <title>Complete sequence of Rhodopseudomonas palustris BisB5.</title>
        <authorList>
            <consortium name="US DOE Joint Genome Institute"/>
            <person name="Copeland A."/>
            <person name="Lucas S."/>
            <person name="Lapidus A."/>
            <person name="Barry K."/>
            <person name="Detter J.C."/>
            <person name="Glavina del Rio T."/>
            <person name="Hammon N."/>
            <person name="Israni S."/>
            <person name="Dalin E."/>
            <person name="Tice H."/>
            <person name="Pitluck S."/>
            <person name="Chain P."/>
            <person name="Malfatti S."/>
            <person name="Shin M."/>
            <person name="Vergez L."/>
            <person name="Schmutz J."/>
            <person name="Larimer F."/>
            <person name="Land M."/>
            <person name="Hauser L."/>
            <person name="Pelletier D.A."/>
            <person name="Kyrpides N."/>
            <person name="Lykidis A."/>
            <person name="Oda Y."/>
            <person name="Harwood C.S."/>
            <person name="Richardson P."/>
        </authorList>
    </citation>
    <scope>NUCLEOTIDE SEQUENCE [LARGE SCALE GENOMIC DNA]</scope>
    <source>
        <strain>BisB5</strain>
    </source>
</reference>
<gene>
    <name evidence="1" type="primary">grpE</name>
    <name type="ordered locus">RPD_0393</name>
</gene>
<dbReference type="EMBL" id="CP000283">
    <property type="protein sequence ID" value="ABE37631.1"/>
    <property type="molecule type" value="Genomic_DNA"/>
</dbReference>
<dbReference type="SMR" id="Q13E58"/>
<dbReference type="STRING" id="316057.RPD_0393"/>
<dbReference type="KEGG" id="rpd:RPD_0393"/>
<dbReference type="eggNOG" id="COG0576">
    <property type="taxonomic scope" value="Bacteria"/>
</dbReference>
<dbReference type="HOGENOM" id="CLU_057217_6_2_5"/>
<dbReference type="BioCyc" id="RPAL316057:RPD_RS02025-MONOMER"/>
<dbReference type="Proteomes" id="UP000001818">
    <property type="component" value="Chromosome"/>
</dbReference>
<dbReference type="GO" id="GO:0005737">
    <property type="term" value="C:cytoplasm"/>
    <property type="evidence" value="ECO:0007669"/>
    <property type="project" value="UniProtKB-SubCell"/>
</dbReference>
<dbReference type="GO" id="GO:0000774">
    <property type="term" value="F:adenyl-nucleotide exchange factor activity"/>
    <property type="evidence" value="ECO:0007669"/>
    <property type="project" value="InterPro"/>
</dbReference>
<dbReference type="GO" id="GO:0042803">
    <property type="term" value="F:protein homodimerization activity"/>
    <property type="evidence" value="ECO:0007669"/>
    <property type="project" value="InterPro"/>
</dbReference>
<dbReference type="GO" id="GO:0051087">
    <property type="term" value="F:protein-folding chaperone binding"/>
    <property type="evidence" value="ECO:0007669"/>
    <property type="project" value="InterPro"/>
</dbReference>
<dbReference type="GO" id="GO:0051082">
    <property type="term" value="F:unfolded protein binding"/>
    <property type="evidence" value="ECO:0007669"/>
    <property type="project" value="TreeGrafter"/>
</dbReference>
<dbReference type="GO" id="GO:0006457">
    <property type="term" value="P:protein folding"/>
    <property type="evidence" value="ECO:0007669"/>
    <property type="project" value="InterPro"/>
</dbReference>
<dbReference type="CDD" id="cd00446">
    <property type="entry name" value="GrpE"/>
    <property type="match status" value="1"/>
</dbReference>
<dbReference type="FunFam" id="2.30.22.10:FF:000002">
    <property type="entry name" value="GrpE protein homolog"/>
    <property type="match status" value="1"/>
</dbReference>
<dbReference type="Gene3D" id="3.90.20.20">
    <property type="match status" value="1"/>
</dbReference>
<dbReference type="Gene3D" id="2.30.22.10">
    <property type="entry name" value="Head domain of nucleotide exchange factor GrpE"/>
    <property type="match status" value="1"/>
</dbReference>
<dbReference type="HAMAP" id="MF_01151">
    <property type="entry name" value="GrpE"/>
    <property type="match status" value="1"/>
</dbReference>
<dbReference type="InterPro" id="IPR000740">
    <property type="entry name" value="GrpE"/>
</dbReference>
<dbReference type="InterPro" id="IPR013805">
    <property type="entry name" value="GrpE_coiled_coil"/>
</dbReference>
<dbReference type="InterPro" id="IPR009012">
    <property type="entry name" value="GrpE_head"/>
</dbReference>
<dbReference type="NCBIfam" id="NF010739">
    <property type="entry name" value="PRK14141.1"/>
    <property type="match status" value="1"/>
</dbReference>
<dbReference type="PANTHER" id="PTHR21237">
    <property type="entry name" value="GRPE PROTEIN"/>
    <property type="match status" value="1"/>
</dbReference>
<dbReference type="PANTHER" id="PTHR21237:SF23">
    <property type="entry name" value="GRPE PROTEIN HOMOLOG, MITOCHONDRIAL"/>
    <property type="match status" value="1"/>
</dbReference>
<dbReference type="Pfam" id="PF01025">
    <property type="entry name" value="GrpE"/>
    <property type="match status" value="1"/>
</dbReference>
<dbReference type="PRINTS" id="PR00773">
    <property type="entry name" value="GRPEPROTEIN"/>
</dbReference>
<dbReference type="SUPFAM" id="SSF58014">
    <property type="entry name" value="Coiled-coil domain of nucleotide exchange factor GrpE"/>
    <property type="match status" value="1"/>
</dbReference>
<dbReference type="SUPFAM" id="SSF51064">
    <property type="entry name" value="Head domain of nucleotide exchange factor GrpE"/>
    <property type="match status" value="1"/>
</dbReference>
<dbReference type="PROSITE" id="PS01071">
    <property type="entry name" value="GRPE"/>
    <property type="match status" value="1"/>
</dbReference>
<comment type="function">
    <text evidence="1">Participates actively in the response to hyperosmotic and heat shock by preventing the aggregation of stress-denatured proteins, in association with DnaK and GrpE. It is the nucleotide exchange factor for DnaK and may function as a thermosensor. Unfolded proteins bind initially to DnaJ; upon interaction with the DnaJ-bound protein, DnaK hydrolyzes its bound ATP, resulting in the formation of a stable complex. GrpE releases ADP from DnaK; ATP binding to DnaK triggers the release of the substrate protein, thus completing the reaction cycle. Several rounds of ATP-dependent interactions between DnaJ, DnaK and GrpE are required for fully efficient folding.</text>
</comment>
<comment type="subunit">
    <text evidence="1">Homodimer.</text>
</comment>
<comment type="subcellular location">
    <subcellularLocation>
        <location evidence="1">Cytoplasm</location>
    </subcellularLocation>
</comment>
<comment type="similarity">
    <text evidence="1">Belongs to the GrpE family.</text>
</comment>
<organism>
    <name type="scientific">Rhodopseudomonas palustris (strain BisB5)</name>
    <dbReference type="NCBI Taxonomy" id="316057"/>
    <lineage>
        <taxon>Bacteria</taxon>
        <taxon>Pseudomonadati</taxon>
        <taxon>Pseudomonadota</taxon>
        <taxon>Alphaproteobacteria</taxon>
        <taxon>Hyphomicrobiales</taxon>
        <taxon>Nitrobacteraceae</taxon>
        <taxon>Rhodopseudomonas</taxon>
    </lineage>
</organism>
<protein>
    <recommendedName>
        <fullName evidence="1">Protein GrpE</fullName>
    </recommendedName>
    <alternativeName>
        <fullName evidence="1">HSP-70 cofactor</fullName>
    </alternativeName>
</protein>
<keyword id="KW-0143">Chaperone</keyword>
<keyword id="KW-0963">Cytoplasm</keyword>
<keyword id="KW-0346">Stress response</keyword>
<feature type="chain" id="PRO_1000053634" description="Protein GrpE">
    <location>
        <begin position="1"/>
        <end position="206"/>
    </location>
</feature>
<feature type="region of interest" description="Disordered" evidence="2">
    <location>
        <begin position="1"/>
        <end position="38"/>
    </location>
</feature>
<feature type="compositionally biased region" description="Polar residues" evidence="2">
    <location>
        <begin position="1"/>
        <end position="15"/>
    </location>
</feature>
<sequence length="206" mass="21969">MTDSNGQKDNNQDQAQPADPVVSKPYIMPDDPEEGTNEALVREAAEARDKMLRTLAEMENLRRRTAKEVADARTYGVSAFARDVLEIADNLQRALDAVPAEARANADAGLKGLIEGVELTERSLINALEKNGVKKFDPQGEKFDPNFQQAMYEVPDPSVPAGTVVQVVQAGFMIGERVLRPALVGVSKGGAKPAPAAANGNEGGVA</sequence>
<name>GRPE_RHOPS</name>
<accession>Q13E58</accession>
<evidence type="ECO:0000255" key="1">
    <source>
        <dbReference type="HAMAP-Rule" id="MF_01151"/>
    </source>
</evidence>
<evidence type="ECO:0000256" key="2">
    <source>
        <dbReference type="SAM" id="MobiDB-lite"/>
    </source>
</evidence>
<proteinExistence type="inferred from homology"/>